<gene>
    <name evidence="1" type="primary">ADE12</name>
    <name type="ordered locus">YNL220W</name>
    <name type="ORF">N1290</name>
</gene>
<reference key="1">
    <citation type="journal article" date="1995" name="Mol. Genet. Mikrobiol. Virusol.">
        <title>Saccharomyces cerevisiae ADE12 gene, coding for adenylosuccinate synthetase (EC 6.3.4.4). Cloning, sequencing, expression, and superproduction.</title>
        <authorList>
            <person name="Andreichuk I.V."/>
            <person name="Shabes A.V."/>
            <person name="Ryzhova T.A."/>
            <person name="Kotova I.A."/>
            <person name="Domkin V.D."/>
        </authorList>
    </citation>
    <scope>NUCLEOTIDE SEQUENCE [GENOMIC DNA]</scope>
</reference>
<reference key="2">
    <citation type="journal article" date="1996" name="Eur. J. Biochem.">
        <title>Enzymatic properties and inhibition by single-stranded autonomously replicating sequences of adenylosuccinate synthase from Saccharomyces cerevisiae.</title>
        <authorList>
            <person name="Gallert K.C."/>
            <person name="Ohanjan T."/>
            <person name="Daignan-Fornier B."/>
            <person name="Lottspeich F."/>
            <person name="Krauss G."/>
        </authorList>
    </citation>
    <scope>NUCLEOTIDE SEQUENCE [GENOMIC DNA]</scope>
    <scope>INHIBITION BY SS-DNA</scope>
    <scope>SUBUNIT</scope>
</reference>
<reference key="3">
    <citation type="journal article" date="1997" name="Nature">
        <title>The nucleotide sequence of Saccharomyces cerevisiae chromosome XIV and its evolutionary implications.</title>
        <authorList>
            <person name="Philippsen P."/>
            <person name="Kleine K."/>
            <person name="Poehlmann R."/>
            <person name="Duesterhoeft A."/>
            <person name="Hamberg K."/>
            <person name="Hegemann J.H."/>
            <person name="Obermaier B."/>
            <person name="Urrestarazu L.A."/>
            <person name="Aert R."/>
            <person name="Albermann K."/>
            <person name="Altmann R."/>
            <person name="Andre B."/>
            <person name="Baladron V."/>
            <person name="Ballesta J.P.G."/>
            <person name="Becam A.-M."/>
            <person name="Beinhauer J.D."/>
            <person name="Boskovic J."/>
            <person name="Buitrago M.J."/>
            <person name="Bussereau F."/>
            <person name="Coster F."/>
            <person name="Crouzet M."/>
            <person name="D'Angelo M."/>
            <person name="Dal Pero F."/>
            <person name="De Antoni A."/>
            <person name="del Rey F."/>
            <person name="Doignon F."/>
            <person name="Domdey H."/>
            <person name="Dubois E."/>
            <person name="Fiedler T.A."/>
            <person name="Fleig U."/>
            <person name="Floeth M."/>
            <person name="Fritz C."/>
            <person name="Gaillardin C."/>
            <person name="Garcia-Cantalejo J.M."/>
            <person name="Glansdorff N."/>
            <person name="Goffeau A."/>
            <person name="Gueldener U."/>
            <person name="Herbert C.J."/>
            <person name="Heumann K."/>
            <person name="Heuss-Neitzel D."/>
            <person name="Hilbert H."/>
            <person name="Hinni K."/>
            <person name="Iraqui Houssaini I."/>
            <person name="Jacquet M."/>
            <person name="Jimenez A."/>
            <person name="Jonniaux J.-L."/>
            <person name="Karpfinger-Hartl L."/>
            <person name="Lanfranchi G."/>
            <person name="Lepingle A."/>
            <person name="Levesque H."/>
            <person name="Lyck R."/>
            <person name="Maftahi M."/>
            <person name="Mallet L."/>
            <person name="Maurer C.T.C."/>
            <person name="Messenguy F."/>
            <person name="Mewes H.-W."/>
            <person name="Moestl D."/>
            <person name="Nasr F."/>
            <person name="Nicaud J.-M."/>
            <person name="Niedenthal R.K."/>
            <person name="Pandolfo D."/>
            <person name="Pierard A."/>
            <person name="Piravandi E."/>
            <person name="Planta R.J."/>
            <person name="Pohl T.M."/>
            <person name="Purnelle B."/>
            <person name="Rebischung C."/>
            <person name="Remacha M.A."/>
            <person name="Revuelta J.L."/>
            <person name="Rinke M."/>
            <person name="Saiz J.E."/>
            <person name="Sartorello F."/>
            <person name="Scherens B."/>
            <person name="Sen-Gupta M."/>
            <person name="Soler-Mira A."/>
            <person name="Urbanus J.H.M."/>
            <person name="Valle G."/>
            <person name="Van Dyck L."/>
            <person name="Verhasselt P."/>
            <person name="Vierendeels F."/>
            <person name="Vissers S."/>
            <person name="Voet M."/>
            <person name="Volckaert G."/>
            <person name="Wach A."/>
            <person name="Wambutt R."/>
            <person name="Wedler H."/>
            <person name="Zollner A."/>
            <person name="Hani J."/>
        </authorList>
    </citation>
    <scope>NUCLEOTIDE SEQUENCE [LARGE SCALE GENOMIC DNA]</scope>
    <source>
        <strain>ATCC 204508 / S288c</strain>
    </source>
</reference>
<reference key="4">
    <citation type="journal article" date="2014" name="G3 (Bethesda)">
        <title>The reference genome sequence of Saccharomyces cerevisiae: Then and now.</title>
        <authorList>
            <person name="Engel S.R."/>
            <person name="Dietrich F.S."/>
            <person name="Fisk D.G."/>
            <person name="Binkley G."/>
            <person name="Balakrishnan R."/>
            <person name="Costanzo M.C."/>
            <person name="Dwight S.S."/>
            <person name="Hitz B.C."/>
            <person name="Karra K."/>
            <person name="Nash R.S."/>
            <person name="Weng S."/>
            <person name="Wong E.D."/>
            <person name="Lloyd P."/>
            <person name="Skrzypek M.S."/>
            <person name="Miyasato S.R."/>
            <person name="Simison M."/>
            <person name="Cherry J.M."/>
        </authorList>
    </citation>
    <scope>GENOME REANNOTATION</scope>
    <source>
        <strain>ATCC 204508 / S288c</strain>
    </source>
</reference>
<reference key="5">
    <citation type="journal article" date="1993" name="J. Biol. Chem.">
        <title>Characterization of two novel single-stranded DNA-specific autonomously replicating sequence-binding proteins from Saccharomyces cerevisiae, one of which is adenylosuccinate synthetase.</title>
        <authorList>
            <person name="Zeidler R."/>
            <person name="Hobert O."/>
            <person name="Johannes L."/>
            <person name="Faulhammer H."/>
            <person name="Krauss G."/>
        </authorList>
    </citation>
    <scope>PROTEIN SEQUENCE OF 2-23 AND 234-245</scope>
</reference>
<reference key="6">
    <citation type="journal article" date="1999" name="Biochem. J.">
        <title>Adenylosuccinate synthase from Saccharomyces cerevisiae: homologous overexpression, purification and characterization of the recombinant protein.</title>
        <authorList>
            <person name="Lipps G."/>
            <person name="Krauss G."/>
        </authorList>
    </citation>
    <scope>PROTEIN SEQUENCE OF 2-6</scope>
    <scope>FUNCTION</scope>
    <scope>BIOPHYSICOCHEMICAL PROPERTIES</scope>
    <scope>SUBUNIT</scope>
    <scope>ACTIVITY REGULATION</scope>
</reference>
<reference key="7">
    <citation type="journal article" date="1998" name="Biochemistry (Mosc.)">
        <title>Adenylosuccinate synthetase of the yeast Saccharomyces cerevisiae: purification and properties.</title>
        <authorList>
            <person name="Ryzhova T.A."/>
            <person name="Andreichuk Y.V."/>
            <person name="Domkin V.D."/>
        </authorList>
    </citation>
    <scope>FUNCTION</scope>
    <scope>BIOPHYSICOCHEMICAL PROPERTIES</scope>
    <scope>SUBUNIT</scope>
</reference>
<reference key="8">
    <citation type="journal article" date="2003" name="Nature">
        <title>Global analysis of protein localization in budding yeast.</title>
        <authorList>
            <person name="Huh W.-K."/>
            <person name="Falvo J.V."/>
            <person name="Gerke L.C."/>
            <person name="Carroll A.S."/>
            <person name="Howson R.W."/>
            <person name="Weissman J.S."/>
            <person name="O'Shea E.K."/>
        </authorList>
    </citation>
    <scope>SUBCELLULAR LOCATION [LARGE SCALE ANALYSIS]</scope>
</reference>
<reference key="9">
    <citation type="journal article" date="2003" name="Nature">
        <title>Global analysis of protein expression in yeast.</title>
        <authorList>
            <person name="Ghaemmaghami S."/>
            <person name="Huh W.-K."/>
            <person name="Bower K."/>
            <person name="Howson R.W."/>
            <person name="Belle A."/>
            <person name="Dephoure N."/>
            <person name="O'Shea E.K."/>
            <person name="Weissman J.S."/>
        </authorList>
    </citation>
    <scope>LEVEL OF PROTEIN EXPRESSION [LARGE SCALE ANALYSIS]</scope>
</reference>
<reference key="10">
    <citation type="journal article" date="2008" name="Mol. Cell. Proteomics">
        <title>A multidimensional chromatography technology for in-depth phosphoproteome analysis.</title>
        <authorList>
            <person name="Albuquerque C.P."/>
            <person name="Smolka M.B."/>
            <person name="Payne S.H."/>
            <person name="Bafna V."/>
            <person name="Eng J."/>
            <person name="Zhou H."/>
        </authorList>
    </citation>
    <scope>IDENTIFICATION BY MASS SPECTROMETRY [LARGE SCALE ANALYSIS]</scope>
</reference>
<dbReference type="EC" id="6.3.4.4" evidence="1"/>
<dbReference type="EMBL" id="L22185">
    <property type="protein sequence ID" value="AAA91338.1"/>
    <property type="molecule type" value="Genomic_DNA"/>
</dbReference>
<dbReference type="EMBL" id="Z48671">
    <property type="protein sequence ID" value="CAA88590.1"/>
    <property type="molecule type" value="Genomic_DNA"/>
</dbReference>
<dbReference type="EMBL" id="Z71496">
    <property type="protein sequence ID" value="CAA96123.1"/>
    <property type="molecule type" value="Genomic_DNA"/>
</dbReference>
<dbReference type="EMBL" id="BK006947">
    <property type="protein sequence ID" value="DAA10336.1"/>
    <property type="molecule type" value="Genomic_DNA"/>
</dbReference>
<dbReference type="PIR" id="S48515">
    <property type="entry name" value="S48515"/>
</dbReference>
<dbReference type="RefSeq" id="NP_014179.1">
    <property type="nucleotide sequence ID" value="NM_001183058.1"/>
</dbReference>
<dbReference type="SMR" id="P80210"/>
<dbReference type="BioGRID" id="35616">
    <property type="interactions" value="165"/>
</dbReference>
<dbReference type="DIP" id="DIP-4286N"/>
<dbReference type="FunCoup" id="P80210">
    <property type="interactions" value="1051"/>
</dbReference>
<dbReference type="IntAct" id="P80210">
    <property type="interactions" value="11"/>
</dbReference>
<dbReference type="MINT" id="P80210"/>
<dbReference type="STRING" id="4932.YNL220W"/>
<dbReference type="GlyGen" id="P80210">
    <property type="glycosylation" value="1 site"/>
</dbReference>
<dbReference type="iPTMnet" id="P80210"/>
<dbReference type="PaxDb" id="4932-YNL220W"/>
<dbReference type="PeptideAtlas" id="P80210"/>
<dbReference type="EnsemblFungi" id="YNL220W_mRNA">
    <property type="protein sequence ID" value="YNL220W"/>
    <property type="gene ID" value="YNL220W"/>
</dbReference>
<dbReference type="GeneID" id="855501"/>
<dbReference type="KEGG" id="sce:YNL220W"/>
<dbReference type="AGR" id="SGD:S000005164"/>
<dbReference type="SGD" id="S000005164">
    <property type="gene designation" value="ADE12"/>
</dbReference>
<dbReference type="VEuPathDB" id="FungiDB:YNL220W"/>
<dbReference type="eggNOG" id="KOG1355">
    <property type="taxonomic scope" value="Eukaryota"/>
</dbReference>
<dbReference type="GeneTree" id="ENSGT00390000015553"/>
<dbReference type="HOGENOM" id="CLU_029848_3_2_1"/>
<dbReference type="InParanoid" id="P80210"/>
<dbReference type="OMA" id="FHHAKPI"/>
<dbReference type="OrthoDB" id="10265645at2759"/>
<dbReference type="BioCyc" id="MetaCyc:YNL220W-MONOMER"/>
<dbReference type="BioCyc" id="YEAST:YNL220W-MONOMER"/>
<dbReference type="Reactome" id="R-SCE-73817">
    <property type="pathway name" value="Purine ribonucleoside monophosphate biosynthesis"/>
</dbReference>
<dbReference type="UniPathway" id="UPA00075">
    <property type="reaction ID" value="UER00335"/>
</dbReference>
<dbReference type="BioGRID-ORCS" id="855501">
    <property type="hits" value="8 hits in 10 CRISPR screens"/>
</dbReference>
<dbReference type="PRO" id="PR:P80210"/>
<dbReference type="Proteomes" id="UP000002311">
    <property type="component" value="Chromosome XIV"/>
</dbReference>
<dbReference type="RNAct" id="P80210">
    <property type="molecule type" value="protein"/>
</dbReference>
<dbReference type="GO" id="GO:0005737">
    <property type="term" value="C:cytoplasm"/>
    <property type="evidence" value="ECO:0007005"/>
    <property type="project" value="SGD"/>
</dbReference>
<dbReference type="GO" id="GO:0004019">
    <property type="term" value="F:adenylosuccinate synthase activity"/>
    <property type="evidence" value="ECO:0000314"/>
    <property type="project" value="SGD"/>
</dbReference>
<dbReference type="GO" id="GO:0003688">
    <property type="term" value="F:DNA replication origin binding"/>
    <property type="evidence" value="ECO:0000314"/>
    <property type="project" value="SGD"/>
</dbReference>
<dbReference type="GO" id="GO:0005525">
    <property type="term" value="F:GTP binding"/>
    <property type="evidence" value="ECO:0007669"/>
    <property type="project" value="UniProtKB-UniRule"/>
</dbReference>
<dbReference type="GO" id="GO:0000287">
    <property type="term" value="F:magnesium ion binding"/>
    <property type="evidence" value="ECO:0007669"/>
    <property type="project" value="UniProtKB-UniRule"/>
</dbReference>
<dbReference type="GO" id="GO:0044208">
    <property type="term" value="P:'de novo' AMP biosynthetic process"/>
    <property type="evidence" value="ECO:0000318"/>
    <property type="project" value="GO_Central"/>
</dbReference>
<dbReference type="GO" id="GO:0046040">
    <property type="term" value="P:IMP metabolic process"/>
    <property type="evidence" value="ECO:0000318"/>
    <property type="project" value="GO_Central"/>
</dbReference>
<dbReference type="GO" id="GO:0006164">
    <property type="term" value="P:purine nucleotide biosynthetic process"/>
    <property type="evidence" value="ECO:0000315"/>
    <property type="project" value="SGD"/>
</dbReference>
<dbReference type="CDD" id="cd03108">
    <property type="entry name" value="AdSS"/>
    <property type="match status" value="1"/>
</dbReference>
<dbReference type="FunFam" id="3.90.170.10:FF:000001">
    <property type="entry name" value="Adenylosuccinate synthetase"/>
    <property type="match status" value="1"/>
</dbReference>
<dbReference type="FunFam" id="1.10.300.10:FF:000002">
    <property type="entry name" value="Adenylosuccinate synthetase, chloroplastic"/>
    <property type="match status" value="1"/>
</dbReference>
<dbReference type="Gene3D" id="3.40.440.10">
    <property type="entry name" value="Adenylosuccinate Synthetase, subunit A, domain 1"/>
    <property type="match status" value="1"/>
</dbReference>
<dbReference type="Gene3D" id="1.10.300.10">
    <property type="entry name" value="Adenylosuccinate Synthetase, subunit A, domain 2"/>
    <property type="match status" value="1"/>
</dbReference>
<dbReference type="Gene3D" id="3.90.170.10">
    <property type="entry name" value="Adenylosuccinate Synthetase, subunit A, domain 3"/>
    <property type="match status" value="1"/>
</dbReference>
<dbReference type="HAMAP" id="MF_00011">
    <property type="entry name" value="Adenylosucc_synth"/>
    <property type="match status" value="1"/>
</dbReference>
<dbReference type="InterPro" id="IPR018220">
    <property type="entry name" value="Adenylosuccin_syn_GTP-bd"/>
</dbReference>
<dbReference type="InterPro" id="IPR033128">
    <property type="entry name" value="Adenylosuccin_syn_Lys_AS"/>
</dbReference>
<dbReference type="InterPro" id="IPR042109">
    <property type="entry name" value="Adenylosuccinate_synth_dom1"/>
</dbReference>
<dbReference type="InterPro" id="IPR042110">
    <property type="entry name" value="Adenylosuccinate_synth_dom2"/>
</dbReference>
<dbReference type="InterPro" id="IPR042111">
    <property type="entry name" value="Adenylosuccinate_synth_dom3"/>
</dbReference>
<dbReference type="InterPro" id="IPR001114">
    <property type="entry name" value="Adenylosuccinate_synthetase"/>
</dbReference>
<dbReference type="InterPro" id="IPR027417">
    <property type="entry name" value="P-loop_NTPase"/>
</dbReference>
<dbReference type="NCBIfam" id="NF002223">
    <property type="entry name" value="PRK01117.1"/>
    <property type="match status" value="1"/>
</dbReference>
<dbReference type="NCBIfam" id="TIGR00184">
    <property type="entry name" value="purA"/>
    <property type="match status" value="1"/>
</dbReference>
<dbReference type="PANTHER" id="PTHR11846">
    <property type="entry name" value="ADENYLOSUCCINATE SYNTHETASE"/>
    <property type="match status" value="1"/>
</dbReference>
<dbReference type="PANTHER" id="PTHR11846:SF0">
    <property type="entry name" value="ADENYLOSUCCINATE SYNTHETASE"/>
    <property type="match status" value="1"/>
</dbReference>
<dbReference type="Pfam" id="PF00709">
    <property type="entry name" value="Adenylsucc_synt"/>
    <property type="match status" value="1"/>
</dbReference>
<dbReference type="SMART" id="SM00788">
    <property type="entry name" value="Adenylsucc_synt"/>
    <property type="match status" value="1"/>
</dbReference>
<dbReference type="SUPFAM" id="SSF52540">
    <property type="entry name" value="P-loop containing nucleoside triphosphate hydrolases"/>
    <property type="match status" value="1"/>
</dbReference>
<dbReference type="PROSITE" id="PS01266">
    <property type="entry name" value="ADENYLOSUCCIN_SYN_1"/>
    <property type="match status" value="1"/>
</dbReference>
<dbReference type="PROSITE" id="PS00513">
    <property type="entry name" value="ADENYLOSUCCIN_SYN_2"/>
    <property type="match status" value="1"/>
</dbReference>
<keyword id="KW-0963">Cytoplasm</keyword>
<keyword id="KW-0903">Direct protein sequencing</keyword>
<keyword id="KW-0342">GTP-binding</keyword>
<keyword id="KW-0436">Ligase</keyword>
<keyword id="KW-0460">Magnesium</keyword>
<keyword id="KW-0479">Metal-binding</keyword>
<keyword id="KW-0547">Nucleotide-binding</keyword>
<keyword id="KW-0658">Purine biosynthesis</keyword>
<keyword id="KW-1185">Reference proteome</keyword>
<feature type="initiator methionine" description="Removed" evidence="2 5">
    <location>
        <position position="1"/>
    </location>
</feature>
<feature type="chain" id="PRO_0000095138" description="Adenylosuccinate synthetase">
    <location>
        <begin position="2"/>
        <end position="433"/>
    </location>
</feature>
<feature type="active site" description="Proton acceptor" evidence="1">
    <location>
        <position position="12"/>
    </location>
</feature>
<feature type="active site" description="Proton donor" evidence="1">
    <location>
        <position position="40"/>
    </location>
</feature>
<feature type="binding site" evidence="1">
    <location>
        <begin position="11"/>
        <end position="17"/>
    </location>
    <ligand>
        <name>GTP</name>
        <dbReference type="ChEBI" id="CHEBI:37565"/>
    </ligand>
</feature>
<feature type="binding site" description="in other chain" evidence="1">
    <location>
        <begin position="12"/>
        <end position="15"/>
    </location>
    <ligand>
        <name>IMP</name>
        <dbReference type="ChEBI" id="CHEBI:58053"/>
        <note>ligand shared between dimeric partners</note>
    </ligand>
</feature>
<feature type="binding site" evidence="1">
    <location>
        <position position="12"/>
    </location>
    <ligand>
        <name>Mg(2+)</name>
        <dbReference type="ChEBI" id="CHEBI:18420"/>
    </ligand>
</feature>
<feature type="binding site" description="in other chain" evidence="1">
    <location>
        <begin position="37"/>
        <end position="40"/>
    </location>
    <ligand>
        <name>IMP</name>
        <dbReference type="ChEBI" id="CHEBI:58053"/>
        <note>ligand shared between dimeric partners</note>
    </ligand>
</feature>
<feature type="binding site" evidence="1">
    <location>
        <begin position="39"/>
        <end position="41"/>
    </location>
    <ligand>
        <name>GTP</name>
        <dbReference type="ChEBI" id="CHEBI:37565"/>
    </ligand>
</feature>
<feature type="binding site" evidence="1">
    <location>
        <position position="39"/>
    </location>
    <ligand>
        <name>Mg(2+)</name>
        <dbReference type="ChEBI" id="CHEBI:18420"/>
    </ligand>
</feature>
<feature type="binding site" description="in other chain" evidence="1">
    <location>
        <position position="134"/>
    </location>
    <ligand>
        <name>IMP</name>
        <dbReference type="ChEBI" id="CHEBI:58053"/>
        <note>ligand shared between dimeric partners</note>
    </ligand>
</feature>
<feature type="binding site" evidence="1">
    <location>
        <position position="148"/>
    </location>
    <ligand>
        <name>IMP</name>
        <dbReference type="ChEBI" id="CHEBI:58053"/>
        <note>ligand shared between dimeric partners</note>
    </ligand>
</feature>
<feature type="binding site" description="in other chain" evidence="1">
    <location>
        <position position="230"/>
    </location>
    <ligand>
        <name>IMP</name>
        <dbReference type="ChEBI" id="CHEBI:58053"/>
        <note>ligand shared between dimeric partners</note>
    </ligand>
</feature>
<feature type="binding site" description="in other chain" evidence="1">
    <location>
        <position position="245"/>
    </location>
    <ligand>
        <name>IMP</name>
        <dbReference type="ChEBI" id="CHEBI:58053"/>
        <note>ligand shared between dimeric partners</note>
    </ligand>
</feature>
<feature type="binding site" evidence="1">
    <location>
        <begin position="305"/>
        <end position="311"/>
    </location>
    <ligand>
        <name>substrate</name>
    </ligand>
</feature>
<feature type="binding site" description="in other chain" evidence="1">
    <location>
        <position position="309"/>
    </location>
    <ligand>
        <name>IMP</name>
        <dbReference type="ChEBI" id="CHEBI:58053"/>
        <note>ligand shared between dimeric partners</note>
    </ligand>
</feature>
<feature type="binding site" evidence="1">
    <location>
        <position position="311"/>
    </location>
    <ligand>
        <name>GTP</name>
        <dbReference type="ChEBI" id="CHEBI:37565"/>
    </ligand>
</feature>
<feature type="binding site" evidence="1">
    <location>
        <begin position="337"/>
        <end position="339"/>
    </location>
    <ligand>
        <name>GTP</name>
        <dbReference type="ChEBI" id="CHEBI:37565"/>
    </ligand>
</feature>
<feature type="binding site" evidence="1">
    <location>
        <begin position="419"/>
        <end position="421"/>
    </location>
    <ligand>
        <name>GTP</name>
        <dbReference type="ChEBI" id="CHEBI:37565"/>
    </ligand>
</feature>
<feature type="sequence conflict" description="In Ref. 5; AA sequence." evidence="8" ref="5">
    <original>D</original>
    <variation>G</variation>
    <location>
        <position position="237"/>
    </location>
</feature>
<sequence>MVNVVLGSQWGDEGKGKLVDLLVGKYDIVARCAGGNNAGHTIVVDGVKYDFHMLPSGLVNPNCQNLLGNGVVIHVPSFFKELETLEAKGLKNARSRLFVSSRAHLVFDFHQVTDKLRELELSGRSKDGKNIGTTGKGIGPTYSTKASRSGLRVHHLVNDQPGAWEEFVARYKRLLETRRQRYGDFEYDFEAKLAEYKKLREQLKPFVVDSVVFMHNAIEAKKKILVEGANALMLDIDFGTYPYVTSSNTGIGGVLTGLGIPPRTIDEIYGVVKAYTTRVGEGPFPTEQLNENGEKLQTIGAEFGVTTGRKRRCGWLDLVVLKYSTLINGYTSLNITKLDVLDTFKEIPVGISYSIQGKKLDLFPEDLNILGKVEVEYKVLPGWDQDITKITKYEDLPENAKKYLKYIEDFVGVPVEWVGTGPARESMLHKEIK</sequence>
<evidence type="ECO:0000255" key="1">
    <source>
        <dbReference type="HAMAP-Rule" id="MF_03125"/>
    </source>
</evidence>
<evidence type="ECO:0000269" key="2">
    <source>
    </source>
</evidence>
<evidence type="ECO:0000269" key="3">
    <source>
    </source>
</evidence>
<evidence type="ECO:0000269" key="4">
    <source>
    </source>
</evidence>
<evidence type="ECO:0000269" key="5">
    <source>
    </source>
</evidence>
<evidence type="ECO:0000269" key="6">
    <source>
    </source>
</evidence>
<evidence type="ECO:0000269" key="7">
    <source>
    </source>
</evidence>
<evidence type="ECO:0000305" key="8"/>
<proteinExistence type="evidence at protein level"/>
<name>PURA_YEAST</name>
<accession>P80210</accession>
<accession>D6W0X0</accession>
<comment type="function">
    <text evidence="2 7">Plays an important role in the de novo pathway and in the salvage pathway of purine nucleotide biosynthesis. Catalyzes the first committed step in the biosynthesis of AMP from IMP.</text>
</comment>
<comment type="catalytic activity">
    <reaction evidence="1">
        <text>IMP + L-aspartate + GTP = N(6)-(1,2-dicarboxyethyl)-AMP + GDP + phosphate + 2 H(+)</text>
        <dbReference type="Rhea" id="RHEA:15753"/>
        <dbReference type="ChEBI" id="CHEBI:15378"/>
        <dbReference type="ChEBI" id="CHEBI:29991"/>
        <dbReference type="ChEBI" id="CHEBI:37565"/>
        <dbReference type="ChEBI" id="CHEBI:43474"/>
        <dbReference type="ChEBI" id="CHEBI:57567"/>
        <dbReference type="ChEBI" id="CHEBI:58053"/>
        <dbReference type="ChEBI" id="CHEBI:58189"/>
        <dbReference type="EC" id="6.3.4.4"/>
    </reaction>
</comment>
<comment type="cofactor">
    <cofactor evidence="1">
        <name>Mg(2+)</name>
        <dbReference type="ChEBI" id="CHEBI:18420"/>
    </cofactor>
    <text evidence="1">Binds 1 Mg(2+) ion per subunit.</text>
</comment>
<comment type="activity regulation">
    <text evidence="2">Inhibited by GMP. Inhibited by chloride. Inhibited in a highly specific manner by the binding of a 44-base DNA oligonucleotide carrying the ARS core consensus sequence.</text>
</comment>
<comment type="biophysicochemical properties">
    <kinetics>
        <KM evidence="2 7">1650 uM for L-aspartate</KM>
        <KM evidence="2 7">200 uM for IMP</KM>
        <KM evidence="2 7">1650 uM for GTP</KM>
    </kinetics>
    <phDependence>
        <text evidence="2 7">Optimum pH is 8.0.</text>
    </phDependence>
    <temperatureDependence>
        <text evidence="2 7">Optimum temperature is 35 degrees Celsius.</text>
    </temperatureDependence>
</comment>
<comment type="pathway">
    <text evidence="1">Purine metabolism; AMP biosynthesis via de novo pathway; AMP from IMP: step 1/2.</text>
</comment>
<comment type="subunit">
    <text evidence="1 2 6 7">Homodimer.</text>
</comment>
<comment type="interaction">
    <interactant intactId="EBI-14267">
        <id>P80210</id>
    </interactant>
    <interactant intactId="EBI-701">
        <id>P33203</id>
        <label>PRP40</label>
    </interactant>
    <organismsDiffer>false</organismsDiffer>
    <experiments>2</experiments>
</comment>
<comment type="interaction">
    <interactant intactId="EBI-14267">
        <id>P80210</id>
    </interactant>
    <interactant intactId="EBI-16219">
        <id>P39940</id>
        <label>RSP5</label>
    </interactant>
    <organismsDiffer>false</organismsDiffer>
    <experiments>2</experiments>
</comment>
<comment type="subcellular location">
    <subcellularLocation>
        <location evidence="1 3">Cytoplasm</location>
    </subcellularLocation>
</comment>
<comment type="miscellaneous">
    <text evidence="4">Present with 56800 molecules/cell in log phase SD medium.</text>
</comment>
<comment type="similarity">
    <text evidence="1">Belongs to the adenylosuccinate synthetase family.</text>
</comment>
<protein>
    <recommendedName>
        <fullName evidence="1">Adenylosuccinate synthetase</fullName>
        <shortName evidence="1">AMPSase</shortName>
        <shortName>AS-synthetase</shortName>
        <shortName evidence="1">AdSS</shortName>
        <ecNumber evidence="1">6.3.4.4</ecNumber>
    </recommendedName>
    <alternativeName>
        <fullName evidence="1">IMP--aspartate ligase</fullName>
    </alternativeName>
</protein>
<organism>
    <name type="scientific">Saccharomyces cerevisiae (strain ATCC 204508 / S288c)</name>
    <name type="common">Baker's yeast</name>
    <dbReference type="NCBI Taxonomy" id="559292"/>
    <lineage>
        <taxon>Eukaryota</taxon>
        <taxon>Fungi</taxon>
        <taxon>Dikarya</taxon>
        <taxon>Ascomycota</taxon>
        <taxon>Saccharomycotina</taxon>
        <taxon>Saccharomycetes</taxon>
        <taxon>Saccharomycetales</taxon>
        <taxon>Saccharomycetaceae</taxon>
        <taxon>Saccharomyces</taxon>
    </lineage>
</organism>